<sequence>MSNQTVSELKVLTAKSATNYGFDVTDFKMFTHLNPLSIQVNIRHKNPDKKVTIDDCSILSQYIDEAIQGSSILDQPFNLEISSEGIGDFLTEEKDFQTFKGFPVEVSYQDLKKIEQQINGLLLKRTDNELHINQKGKTQRIPVEDVIQVRLATPSG</sequence>
<reference key="1">
    <citation type="journal article" date="2007" name="PLoS Genet.">
        <title>Patterns and implications of gene gain and loss in the evolution of Prochlorococcus.</title>
        <authorList>
            <person name="Kettler G.C."/>
            <person name="Martiny A.C."/>
            <person name="Huang K."/>
            <person name="Zucker J."/>
            <person name="Coleman M.L."/>
            <person name="Rodrigue S."/>
            <person name="Chen F."/>
            <person name="Lapidus A."/>
            <person name="Ferriera S."/>
            <person name="Johnson J."/>
            <person name="Steglich C."/>
            <person name="Church G.M."/>
            <person name="Richardson P."/>
            <person name="Chisholm S.W."/>
        </authorList>
    </citation>
    <scope>NUCLEOTIDE SEQUENCE [LARGE SCALE GENOMIC DNA]</scope>
    <source>
        <strain>NATL2A</strain>
    </source>
</reference>
<organism>
    <name type="scientific">Prochlorococcus marinus (strain NATL2A)</name>
    <dbReference type="NCBI Taxonomy" id="59920"/>
    <lineage>
        <taxon>Bacteria</taxon>
        <taxon>Bacillati</taxon>
        <taxon>Cyanobacteriota</taxon>
        <taxon>Cyanophyceae</taxon>
        <taxon>Synechococcales</taxon>
        <taxon>Prochlorococcaceae</taxon>
        <taxon>Prochlorococcus</taxon>
    </lineage>
</organism>
<feature type="chain" id="PRO_0000229262" description="Ribosome maturation factor RimP">
    <location>
        <begin position="1"/>
        <end position="156"/>
    </location>
</feature>
<evidence type="ECO:0000255" key="1">
    <source>
        <dbReference type="HAMAP-Rule" id="MF_01077"/>
    </source>
</evidence>
<evidence type="ECO:0000305" key="2"/>
<proteinExistence type="inferred from homology"/>
<accession>Q46J16</accession>
<gene>
    <name evidence="1" type="primary">rimP</name>
    <name type="ordered locus">PMN2A_1022</name>
</gene>
<name>RIMP_PROMT</name>
<comment type="function">
    <text evidence="1">Required for maturation of 30S ribosomal subunits.</text>
</comment>
<comment type="subcellular location">
    <subcellularLocation>
        <location evidence="1">Cytoplasm</location>
    </subcellularLocation>
</comment>
<comment type="similarity">
    <text evidence="1">Belongs to the RimP family.</text>
</comment>
<comment type="sequence caution" evidence="2">
    <conflict type="erroneous initiation">
        <sequence resource="EMBL-CDS" id="AAZ58512"/>
    </conflict>
</comment>
<keyword id="KW-0963">Cytoplasm</keyword>
<keyword id="KW-1185">Reference proteome</keyword>
<keyword id="KW-0690">Ribosome biogenesis</keyword>
<dbReference type="EMBL" id="CP000095">
    <property type="protein sequence ID" value="AAZ58512.1"/>
    <property type="status" value="ALT_INIT"/>
    <property type="molecule type" value="Genomic_DNA"/>
</dbReference>
<dbReference type="RefSeq" id="WP_011295367.1">
    <property type="nucleotide sequence ID" value="NC_007335.2"/>
</dbReference>
<dbReference type="SMR" id="Q46J16"/>
<dbReference type="STRING" id="59920.PMN2A_1022"/>
<dbReference type="KEGG" id="pmn:PMN2A_1022"/>
<dbReference type="HOGENOM" id="CLU_070525_2_1_3"/>
<dbReference type="OrthoDB" id="9805006at2"/>
<dbReference type="PhylomeDB" id="Q46J16"/>
<dbReference type="Proteomes" id="UP000002535">
    <property type="component" value="Chromosome"/>
</dbReference>
<dbReference type="GO" id="GO:0005829">
    <property type="term" value="C:cytosol"/>
    <property type="evidence" value="ECO:0007669"/>
    <property type="project" value="TreeGrafter"/>
</dbReference>
<dbReference type="GO" id="GO:0000028">
    <property type="term" value="P:ribosomal small subunit assembly"/>
    <property type="evidence" value="ECO:0007669"/>
    <property type="project" value="TreeGrafter"/>
</dbReference>
<dbReference type="GO" id="GO:0006412">
    <property type="term" value="P:translation"/>
    <property type="evidence" value="ECO:0007669"/>
    <property type="project" value="TreeGrafter"/>
</dbReference>
<dbReference type="Gene3D" id="3.30.300.70">
    <property type="entry name" value="RimP-like superfamily, N-terminal"/>
    <property type="match status" value="1"/>
</dbReference>
<dbReference type="HAMAP" id="MF_01077">
    <property type="entry name" value="RimP"/>
    <property type="match status" value="1"/>
</dbReference>
<dbReference type="InterPro" id="IPR003728">
    <property type="entry name" value="Ribosome_maturation_RimP"/>
</dbReference>
<dbReference type="InterPro" id="IPR036847">
    <property type="entry name" value="RimP_C_sf"/>
</dbReference>
<dbReference type="InterPro" id="IPR028989">
    <property type="entry name" value="RimP_N"/>
</dbReference>
<dbReference type="InterPro" id="IPR035956">
    <property type="entry name" value="RimP_N_sf"/>
</dbReference>
<dbReference type="PANTHER" id="PTHR33867">
    <property type="entry name" value="RIBOSOME MATURATION FACTOR RIMP"/>
    <property type="match status" value="1"/>
</dbReference>
<dbReference type="PANTHER" id="PTHR33867:SF1">
    <property type="entry name" value="RIBOSOME MATURATION FACTOR RIMP"/>
    <property type="match status" value="1"/>
</dbReference>
<dbReference type="Pfam" id="PF02576">
    <property type="entry name" value="RimP_N"/>
    <property type="match status" value="1"/>
</dbReference>
<dbReference type="SUPFAM" id="SSF74942">
    <property type="entry name" value="YhbC-like, C-terminal domain"/>
    <property type="match status" value="1"/>
</dbReference>
<dbReference type="SUPFAM" id="SSF75420">
    <property type="entry name" value="YhbC-like, N-terminal domain"/>
    <property type="match status" value="1"/>
</dbReference>
<protein>
    <recommendedName>
        <fullName evidence="1">Ribosome maturation factor RimP</fullName>
    </recommendedName>
</protein>